<reference key="1">
    <citation type="submission" date="2006-12" db="EMBL/GenBank/DDBJ databases">
        <title>Complete sequence of Halorhodospira halophila SL1.</title>
        <authorList>
            <consortium name="US DOE Joint Genome Institute"/>
            <person name="Copeland A."/>
            <person name="Lucas S."/>
            <person name="Lapidus A."/>
            <person name="Barry K."/>
            <person name="Detter J.C."/>
            <person name="Glavina del Rio T."/>
            <person name="Hammon N."/>
            <person name="Israni S."/>
            <person name="Dalin E."/>
            <person name="Tice H."/>
            <person name="Pitluck S."/>
            <person name="Saunders E."/>
            <person name="Brettin T."/>
            <person name="Bruce D."/>
            <person name="Han C."/>
            <person name="Tapia R."/>
            <person name="Schmutz J."/>
            <person name="Larimer F."/>
            <person name="Land M."/>
            <person name="Hauser L."/>
            <person name="Kyrpides N."/>
            <person name="Mikhailova N."/>
            <person name="Hoff W."/>
            <person name="Richardson P."/>
        </authorList>
    </citation>
    <scope>NUCLEOTIDE SEQUENCE [LARGE SCALE GENOMIC DNA]</scope>
    <source>
        <strain>DSM 244 / SL1</strain>
    </source>
</reference>
<gene>
    <name evidence="1" type="primary">pyrE</name>
    <name type="ordered locus">Hhal_2292</name>
</gene>
<dbReference type="EC" id="2.4.2.10" evidence="1"/>
<dbReference type="EMBL" id="CP000544">
    <property type="protein sequence ID" value="ABM63055.1"/>
    <property type="molecule type" value="Genomic_DNA"/>
</dbReference>
<dbReference type="RefSeq" id="WP_011815077.1">
    <property type="nucleotide sequence ID" value="NC_008789.1"/>
</dbReference>
<dbReference type="SMR" id="A1WZE3"/>
<dbReference type="STRING" id="349124.Hhal_2292"/>
<dbReference type="KEGG" id="hha:Hhal_2292"/>
<dbReference type="eggNOG" id="COG0461">
    <property type="taxonomic scope" value="Bacteria"/>
</dbReference>
<dbReference type="HOGENOM" id="CLU_074878_0_1_6"/>
<dbReference type="OrthoDB" id="9779060at2"/>
<dbReference type="UniPathway" id="UPA00070">
    <property type="reaction ID" value="UER00119"/>
</dbReference>
<dbReference type="Proteomes" id="UP000000647">
    <property type="component" value="Chromosome"/>
</dbReference>
<dbReference type="GO" id="GO:0005737">
    <property type="term" value="C:cytoplasm"/>
    <property type="evidence" value="ECO:0007669"/>
    <property type="project" value="TreeGrafter"/>
</dbReference>
<dbReference type="GO" id="GO:0000287">
    <property type="term" value="F:magnesium ion binding"/>
    <property type="evidence" value="ECO:0007669"/>
    <property type="project" value="UniProtKB-UniRule"/>
</dbReference>
<dbReference type="GO" id="GO:0004588">
    <property type="term" value="F:orotate phosphoribosyltransferase activity"/>
    <property type="evidence" value="ECO:0007669"/>
    <property type="project" value="UniProtKB-UniRule"/>
</dbReference>
<dbReference type="GO" id="GO:0006207">
    <property type="term" value="P:'de novo' pyrimidine nucleobase biosynthetic process"/>
    <property type="evidence" value="ECO:0007669"/>
    <property type="project" value="TreeGrafter"/>
</dbReference>
<dbReference type="GO" id="GO:0044205">
    <property type="term" value="P:'de novo' UMP biosynthetic process"/>
    <property type="evidence" value="ECO:0007669"/>
    <property type="project" value="UniProtKB-UniRule"/>
</dbReference>
<dbReference type="GO" id="GO:0046132">
    <property type="term" value="P:pyrimidine ribonucleoside biosynthetic process"/>
    <property type="evidence" value="ECO:0007669"/>
    <property type="project" value="TreeGrafter"/>
</dbReference>
<dbReference type="CDD" id="cd06223">
    <property type="entry name" value="PRTases_typeI"/>
    <property type="match status" value="1"/>
</dbReference>
<dbReference type="FunFam" id="3.40.50.2020:FF:000008">
    <property type="entry name" value="Orotate phosphoribosyltransferase"/>
    <property type="match status" value="1"/>
</dbReference>
<dbReference type="Gene3D" id="3.40.50.2020">
    <property type="match status" value="1"/>
</dbReference>
<dbReference type="HAMAP" id="MF_01208">
    <property type="entry name" value="PyrE"/>
    <property type="match status" value="1"/>
</dbReference>
<dbReference type="InterPro" id="IPR023031">
    <property type="entry name" value="OPRT"/>
</dbReference>
<dbReference type="InterPro" id="IPR004467">
    <property type="entry name" value="Or_phspho_trans_dom"/>
</dbReference>
<dbReference type="InterPro" id="IPR000836">
    <property type="entry name" value="PRibTrfase_dom"/>
</dbReference>
<dbReference type="InterPro" id="IPR029057">
    <property type="entry name" value="PRTase-like"/>
</dbReference>
<dbReference type="NCBIfam" id="TIGR00336">
    <property type="entry name" value="pyrE"/>
    <property type="match status" value="1"/>
</dbReference>
<dbReference type="PANTHER" id="PTHR46683">
    <property type="entry name" value="OROTATE PHOSPHORIBOSYLTRANSFERASE 1-RELATED"/>
    <property type="match status" value="1"/>
</dbReference>
<dbReference type="PANTHER" id="PTHR46683:SF1">
    <property type="entry name" value="OROTATE PHOSPHORIBOSYLTRANSFERASE 1-RELATED"/>
    <property type="match status" value="1"/>
</dbReference>
<dbReference type="Pfam" id="PF00156">
    <property type="entry name" value="Pribosyltran"/>
    <property type="match status" value="1"/>
</dbReference>
<dbReference type="SUPFAM" id="SSF53271">
    <property type="entry name" value="PRTase-like"/>
    <property type="match status" value="1"/>
</dbReference>
<dbReference type="PROSITE" id="PS00103">
    <property type="entry name" value="PUR_PYR_PR_TRANSFER"/>
    <property type="match status" value="1"/>
</dbReference>
<protein>
    <recommendedName>
        <fullName evidence="1">Orotate phosphoribosyltransferase</fullName>
        <shortName evidence="1">OPRT</shortName>
        <shortName evidence="1">OPRTase</shortName>
        <ecNumber evidence="1">2.4.2.10</ecNumber>
    </recommendedName>
</protein>
<comment type="function">
    <text evidence="1">Catalyzes the transfer of a ribosyl phosphate group from 5-phosphoribose 1-diphosphate to orotate, leading to the formation of orotidine monophosphate (OMP).</text>
</comment>
<comment type="catalytic activity">
    <reaction evidence="1">
        <text>orotidine 5'-phosphate + diphosphate = orotate + 5-phospho-alpha-D-ribose 1-diphosphate</text>
        <dbReference type="Rhea" id="RHEA:10380"/>
        <dbReference type="ChEBI" id="CHEBI:30839"/>
        <dbReference type="ChEBI" id="CHEBI:33019"/>
        <dbReference type="ChEBI" id="CHEBI:57538"/>
        <dbReference type="ChEBI" id="CHEBI:58017"/>
        <dbReference type="EC" id="2.4.2.10"/>
    </reaction>
</comment>
<comment type="cofactor">
    <cofactor evidence="1">
        <name>Mg(2+)</name>
        <dbReference type="ChEBI" id="CHEBI:18420"/>
    </cofactor>
</comment>
<comment type="pathway">
    <text evidence="1">Pyrimidine metabolism; UMP biosynthesis via de novo pathway; UMP from orotate: step 1/2.</text>
</comment>
<comment type="subunit">
    <text evidence="1">Homodimer.</text>
</comment>
<comment type="similarity">
    <text evidence="1">Belongs to the purine/pyrimidine phosphoribosyltransferase family. PyrE subfamily.</text>
</comment>
<name>PYRE_HALHL</name>
<keyword id="KW-0328">Glycosyltransferase</keyword>
<keyword id="KW-0460">Magnesium</keyword>
<keyword id="KW-0665">Pyrimidine biosynthesis</keyword>
<keyword id="KW-1185">Reference proteome</keyword>
<keyword id="KW-0808">Transferase</keyword>
<feature type="chain" id="PRO_1000066237" description="Orotate phosphoribosyltransferase">
    <location>
        <begin position="1"/>
        <end position="215"/>
    </location>
</feature>
<feature type="binding site" description="in other chain" evidence="1">
    <location>
        <position position="26"/>
    </location>
    <ligand>
        <name>5-phospho-alpha-D-ribose 1-diphosphate</name>
        <dbReference type="ChEBI" id="CHEBI:58017"/>
        <note>ligand shared between dimeric partners</note>
    </ligand>
</feature>
<feature type="binding site" evidence="1">
    <location>
        <begin position="34"/>
        <end position="35"/>
    </location>
    <ligand>
        <name>orotate</name>
        <dbReference type="ChEBI" id="CHEBI:30839"/>
    </ligand>
</feature>
<feature type="binding site" description="in other chain" evidence="1">
    <location>
        <begin position="72"/>
        <end position="73"/>
    </location>
    <ligand>
        <name>5-phospho-alpha-D-ribose 1-diphosphate</name>
        <dbReference type="ChEBI" id="CHEBI:58017"/>
        <note>ligand shared between dimeric partners</note>
    </ligand>
</feature>
<feature type="binding site" evidence="1">
    <location>
        <position position="99"/>
    </location>
    <ligand>
        <name>5-phospho-alpha-D-ribose 1-diphosphate</name>
        <dbReference type="ChEBI" id="CHEBI:58017"/>
        <note>ligand shared between dimeric partners</note>
    </ligand>
</feature>
<feature type="binding site" description="in other chain" evidence="1">
    <location>
        <position position="100"/>
    </location>
    <ligand>
        <name>5-phospho-alpha-D-ribose 1-diphosphate</name>
        <dbReference type="ChEBI" id="CHEBI:58017"/>
        <note>ligand shared between dimeric partners</note>
    </ligand>
</feature>
<feature type="binding site" evidence="1">
    <location>
        <position position="103"/>
    </location>
    <ligand>
        <name>5-phospho-alpha-D-ribose 1-diphosphate</name>
        <dbReference type="ChEBI" id="CHEBI:58017"/>
        <note>ligand shared between dimeric partners</note>
    </ligand>
</feature>
<feature type="binding site" evidence="1">
    <location>
        <position position="105"/>
    </location>
    <ligand>
        <name>5-phospho-alpha-D-ribose 1-diphosphate</name>
        <dbReference type="ChEBI" id="CHEBI:58017"/>
        <note>ligand shared between dimeric partners</note>
    </ligand>
</feature>
<feature type="binding site" description="in other chain" evidence="1">
    <location>
        <begin position="125"/>
        <end position="133"/>
    </location>
    <ligand>
        <name>5-phospho-alpha-D-ribose 1-diphosphate</name>
        <dbReference type="ChEBI" id="CHEBI:58017"/>
        <note>ligand shared between dimeric partners</note>
    </ligand>
</feature>
<feature type="binding site" evidence="1">
    <location>
        <position position="129"/>
    </location>
    <ligand>
        <name>orotate</name>
        <dbReference type="ChEBI" id="CHEBI:30839"/>
    </ligand>
</feature>
<feature type="binding site" evidence="1">
    <location>
        <position position="157"/>
    </location>
    <ligand>
        <name>orotate</name>
        <dbReference type="ChEBI" id="CHEBI:30839"/>
    </ligand>
</feature>
<proteinExistence type="inferred from homology"/>
<organism>
    <name type="scientific">Halorhodospira halophila (strain DSM 244 / SL1)</name>
    <name type="common">Ectothiorhodospira halophila (strain DSM 244 / SL1)</name>
    <dbReference type="NCBI Taxonomy" id="349124"/>
    <lineage>
        <taxon>Bacteria</taxon>
        <taxon>Pseudomonadati</taxon>
        <taxon>Pseudomonadota</taxon>
        <taxon>Gammaproteobacteria</taxon>
        <taxon>Chromatiales</taxon>
        <taxon>Ectothiorhodospiraceae</taxon>
        <taxon>Halorhodospira</taxon>
    </lineage>
</organism>
<accession>A1WZE3</accession>
<evidence type="ECO:0000255" key="1">
    <source>
        <dbReference type="HAMAP-Rule" id="MF_01208"/>
    </source>
</evidence>
<sequence>MYEYQEDFIRFALDRGVLRFGRFTLKSGRESPYFFNTGLFNSGTALSKLGRCYVESLVRAQIDFDLVFGPAYKGIPLATAVAMALAETRNRDVPYAFDRKEVKDHGEGGRLVGAPVEGRRAVIVDDVISSGISIREAAELITAEGGTVAAVAIALDRKERGRDEVSAVHEVEQTLGAPVVPIITLDHLETYLADHGGKGDTLDAIRQYRARYGAA</sequence>